<accession>P0AET1</accession>
<accession>P26604</accession>
<gene>
    <name evidence="1" type="primary">hdeA</name>
    <name type="ordered locus">SF3544</name>
    <name type="ordered locus">S4223</name>
</gene>
<keyword id="KW-0143">Chaperone</keyword>
<keyword id="KW-1015">Disulfide bond</keyword>
<keyword id="KW-0574">Periplasm</keyword>
<keyword id="KW-1185">Reference proteome</keyword>
<keyword id="KW-0732">Signal</keyword>
<organism>
    <name type="scientific">Shigella flexneri</name>
    <dbReference type="NCBI Taxonomy" id="623"/>
    <lineage>
        <taxon>Bacteria</taxon>
        <taxon>Pseudomonadati</taxon>
        <taxon>Pseudomonadota</taxon>
        <taxon>Gammaproteobacteria</taxon>
        <taxon>Enterobacterales</taxon>
        <taxon>Enterobacteriaceae</taxon>
        <taxon>Shigella</taxon>
    </lineage>
</organism>
<dbReference type="EMBL" id="AE005674">
    <property type="protein sequence ID" value="AAN44999.1"/>
    <property type="molecule type" value="Genomic_DNA"/>
</dbReference>
<dbReference type="EMBL" id="AE014073">
    <property type="protein sequence ID" value="AAP19187.1"/>
    <property type="molecule type" value="Genomic_DNA"/>
</dbReference>
<dbReference type="RefSeq" id="NP_709292.1">
    <property type="nucleotide sequence ID" value="NC_004337.2"/>
</dbReference>
<dbReference type="RefSeq" id="WP_000756550.1">
    <property type="nucleotide sequence ID" value="NZ_WPGW01000225.1"/>
</dbReference>
<dbReference type="BMRB" id="P0AET1"/>
<dbReference type="SMR" id="P0AET1"/>
<dbReference type="STRING" id="198214.SF3544"/>
<dbReference type="PaxDb" id="198214-SF3544"/>
<dbReference type="GeneID" id="1026387"/>
<dbReference type="GeneID" id="93778475"/>
<dbReference type="KEGG" id="sfl:SF3544"/>
<dbReference type="KEGG" id="sfx:S4223"/>
<dbReference type="PATRIC" id="fig|198214.7.peg.4174"/>
<dbReference type="HOGENOM" id="CLU_170142_1_0_6"/>
<dbReference type="Proteomes" id="UP000001006">
    <property type="component" value="Chromosome"/>
</dbReference>
<dbReference type="Proteomes" id="UP000002673">
    <property type="component" value="Chromosome"/>
</dbReference>
<dbReference type="GO" id="GO:0030288">
    <property type="term" value="C:outer membrane-bounded periplasmic space"/>
    <property type="evidence" value="ECO:0007669"/>
    <property type="project" value="InterPro"/>
</dbReference>
<dbReference type="GO" id="GO:1990451">
    <property type="term" value="P:cellular stress response to acidic pH"/>
    <property type="evidence" value="ECO:0007669"/>
    <property type="project" value="UniProtKB-UniRule"/>
</dbReference>
<dbReference type="FunFam" id="1.10.890.10:FF:000001">
    <property type="entry name" value="Acid stress chaperone HdeA"/>
    <property type="match status" value="1"/>
</dbReference>
<dbReference type="Gene3D" id="1.10.890.10">
    <property type="entry name" value="HNS-dependent expression A"/>
    <property type="match status" value="1"/>
</dbReference>
<dbReference type="HAMAP" id="MF_00946">
    <property type="entry name" value="HdeA"/>
    <property type="match status" value="1"/>
</dbReference>
<dbReference type="InterPro" id="IPR024972">
    <property type="entry name" value="HdeA"/>
</dbReference>
<dbReference type="InterPro" id="IPR038303">
    <property type="entry name" value="HdeA/HdeB_sf"/>
</dbReference>
<dbReference type="InterPro" id="IPR036831">
    <property type="entry name" value="HdeA_sf"/>
</dbReference>
<dbReference type="InterPro" id="IPR010486">
    <property type="entry name" value="HNS-dep_expression_A/B"/>
</dbReference>
<dbReference type="NCBIfam" id="NF007576">
    <property type="entry name" value="PRK10208.1"/>
    <property type="match status" value="1"/>
</dbReference>
<dbReference type="Pfam" id="PF06411">
    <property type="entry name" value="HdeA"/>
    <property type="match status" value="1"/>
</dbReference>
<dbReference type="PIRSF" id="PIRSF009564">
    <property type="entry name" value="HNS-dep_expression_A"/>
    <property type="match status" value="1"/>
</dbReference>
<dbReference type="SUPFAM" id="SSF47752">
    <property type="entry name" value="Protein HNS-dependent expression A, HdeA"/>
    <property type="match status" value="1"/>
</dbReference>
<reference key="1">
    <citation type="journal article" date="2002" name="Nucleic Acids Res.">
        <title>Genome sequence of Shigella flexneri 2a: insights into pathogenicity through comparison with genomes of Escherichia coli K12 and O157.</title>
        <authorList>
            <person name="Jin Q."/>
            <person name="Yuan Z."/>
            <person name="Xu J."/>
            <person name="Wang Y."/>
            <person name="Shen Y."/>
            <person name="Lu W."/>
            <person name="Wang J."/>
            <person name="Liu H."/>
            <person name="Yang J."/>
            <person name="Yang F."/>
            <person name="Zhang X."/>
            <person name="Zhang J."/>
            <person name="Yang G."/>
            <person name="Wu H."/>
            <person name="Qu D."/>
            <person name="Dong J."/>
            <person name="Sun L."/>
            <person name="Xue Y."/>
            <person name="Zhao A."/>
            <person name="Gao Y."/>
            <person name="Zhu J."/>
            <person name="Kan B."/>
            <person name="Ding K."/>
            <person name="Chen S."/>
            <person name="Cheng H."/>
            <person name="Yao Z."/>
            <person name="He B."/>
            <person name="Chen R."/>
            <person name="Ma D."/>
            <person name="Qiang B."/>
            <person name="Wen Y."/>
            <person name="Hou Y."/>
            <person name="Yu J."/>
        </authorList>
    </citation>
    <scope>NUCLEOTIDE SEQUENCE [LARGE SCALE GENOMIC DNA]</scope>
    <source>
        <strain>301 / Serotype 2a</strain>
    </source>
</reference>
<reference key="2">
    <citation type="journal article" date="2003" name="Infect. Immun.">
        <title>Complete genome sequence and comparative genomics of Shigella flexneri serotype 2a strain 2457T.</title>
        <authorList>
            <person name="Wei J."/>
            <person name="Goldberg M.B."/>
            <person name="Burland V."/>
            <person name="Venkatesan M.M."/>
            <person name="Deng W."/>
            <person name="Fournier G."/>
            <person name="Mayhew G.F."/>
            <person name="Plunkett G. III"/>
            <person name="Rose D.J."/>
            <person name="Darling A."/>
            <person name="Mau B."/>
            <person name="Perna N.T."/>
            <person name="Payne S.M."/>
            <person name="Runyen-Janecky L.J."/>
            <person name="Zhou S."/>
            <person name="Schwartz D.C."/>
            <person name="Blattner F.R."/>
        </authorList>
    </citation>
    <scope>NUCLEOTIDE SEQUENCE [LARGE SCALE GENOMIC DNA]</scope>
    <source>
        <strain>ATCC 700930 / 2457T / Serotype 2a</strain>
    </source>
</reference>
<protein>
    <recommendedName>
        <fullName evidence="1">Acid stress chaperone HdeA</fullName>
    </recommendedName>
</protein>
<evidence type="ECO:0000255" key="1">
    <source>
        <dbReference type="HAMAP-Rule" id="MF_00946"/>
    </source>
</evidence>
<comment type="function">
    <text evidence="1">Required for optimal acid stress protection. Exhibits a chaperone-like activity only at low pH by suppressing non-specifically the aggregation of denaturated periplasmic proteins.</text>
</comment>
<comment type="subcellular location">
    <subcellularLocation>
        <location evidence="1">Periplasm</location>
    </subcellularLocation>
</comment>
<comment type="similarity">
    <text evidence="1">Belongs to the HdeA family.</text>
</comment>
<sequence length="110" mass="11858">MKKVLGVILGGLLLLPVVSNAADAQKAADNKKPVNSWTCEDFLAVDESFQPTAVGFAEALNNKDKPEDAVLDVQGIATVTPAIVQACTQDKQANFKDKVKGEWDKIKKDM</sequence>
<name>HDEA_SHIFL</name>
<feature type="signal peptide" evidence="1">
    <location>
        <begin position="1"/>
        <end position="21"/>
    </location>
</feature>
<feature type="chain" id="PRO_0000045101" description="Acid stress chaperone HdeA">
    <location>
        <begin position="22"/>
        <end position="110"/>
    </location>
</feature>
<feature type="disulfide bond" evidence="1">
    <location>
        <begin position="39"/>
        <end position="87"/>
    </location>
</feature>
<proteinExistence type="inferred from homology"/>